<keyword id="KW-1185">Reference proteome</keyword>
<protein>
    <recommendedName>
        <fullName>Uncharacterized protein ORF211</fullName>
    </recommendedName>
</protein>
<name>Y211_ATV</name>
<organismHost>
    <name type="scientific">Acidianus convivator</name>
    <dbReference type="NCBI Taxonomy" id="269667"/>
</organismHost>
<organism>
    <name type="scientific">Acidianus two-tailed virus</name>
    <name type="common">ATV</name>
    <dbReference type="NCBI Taxonomy" id="315953"/>
    <lineage>
        <taxon>Viruses</taxon>
        <taxon>Viruses incertae sedis</taxon>
        <taxon>Bicaudaviridae</taxon>
        <taxon>Bicaudavirus</taxon>
    </lineage>
</organism>
<sequence>MLELFRKKKVEPPKITVTLTDLMMFLPTLRKHVIPYQIKCDYCSGIVTDANGFVLYRRIPIPDAVLRALINFSNAIDQQLKDTIFYFSMAKREVIGRMVYKAKLNALKKGNTKNIQKITAELPRLLYRILYPYKATTSILYIDGAVYPDIVDFVALREEEKTYISNNFSFYLYADSSYVYAIMLTTREQILRIKTLLANRDVPLRSLDGQQ</sequence>
<dbReference type="EMBL" id="AJ888457">
    <property type="protein sequence ID" value="CAI59851.1"/>
    <property type="molecule type" value="Genomic_DNA"/>
</dbReference>
<dbReference type="RefSeq" id="YP_319849.1">
    <property type="nucleotide sequence ID" value="NC_007409.1"/>
</dbReference>
<dbReference type="GeneID" id="4484226"/>
<dbReference type="KEGG" id="vg:4484226"/>
<dbReference type="Proteomes" id="UP000002150">
    <property type="component" value="Genome"/>
</dbReference>
<accession>Q3V4W3</accession>
<proteinExistence type="predicted"/>
<reference key="1">
    <citation type="journal article" date="2005" name="Nature">
        <title>Virology: independent virus development outside a host.</title>
        <authorList>
            <person name="Haring M."/>
            <person name="Vestergaard G."/>
            <person name="Rachel R."/>
            <person name="Chen L."/>
            <person name="Garrett R.A."/>
            <person name="Prangishvili D."/>
        </authorList>
    </citation>
    <scope>NUCLEOTIDE SEQUENCE [GENOMIC DNA]</scope>
</reference>
<feature type="chain" id="PRO_0000389058" description="Uncharacterized protein ORF211">
    <location>
        <begin position="1"/>
        <end position="211"/>
    </location>
</feature>